<accession>A5VA56</accession>
<dbReference type="EMBL" id="CP000699">
    <property type="protein sequence ID" value="ABQ69172.1"/>
    <property type="molecule type" value="Genomic_DNA"/>
</dbReference>
<dbReference type="STRING" id="392499.Swit_2819"/>
<dbReference type="PaxDb" id="392499-Swit_2819"/>
<dbReference type="KEGG" id="swi:Swit_2819"/>
<dbReference type="eggNOG" id="COG2983">
    <property type="taxonomic scope" value="Bacteria"/>
</dbReference>
<dbReference type="HOGENOM" id="CLU_109769_1_0_5"/>
<dbReference type="OrthoDB" id="9786855at2"/>
<dbReference type="Proteomes" id="UP000001989">
    <property type="component" value="Chromosome"/>
</dbReference>
<dbReference type="HAMAP" id="MF_00676">
    <property type="entry name" value="UPF0260"/>
    <property type="match status" value="1"/>
</dbReference>
<dbReference type="InterPro" id="IPR005358">
    <property type="entry name" value="Puta_zinc/iron-chelating_dom"/>
</dbReference>
<dbReference type="InterPro" id="IPR008228">
    <property type="entry name" value="UCP006173"/>
</dbReference>
<dbReference type="NCBIfam" id="NF003501">
    <property type="entry name" value="PRK05170.1-5"/>
    <property type="match status" value="1"/>
</dbReference>
<dbReference type="NCBIfam" id="NF003507">
    <property type="entry name" value="PRK05170.2-5"/>
    <property type="match status" value="1"/>
</dbReference>
<dbReference type="PANTHER" id="PTHR37421">
    <property type="entry name" value="UPF0260 PROTEIN YCGN"/>
    <property type="match status" value="1"/>
</dbReference>
<dbReference type="PANTHER" id="PTHR37421:SF1">
    <property type="entry name" value="UPF0260 PROTEIN YCGN"/>
    <property type="match status" value="1"/>
</dbReference>
<dbReference type="Pfam" id="PF03692">
    <property type="entry name" value="CxxCxxCC"/>
    <property type="match status" value="1"/>
</dbReference>
<dbReference type="PIRSF" id="PIRSF006173">
    <property type="entry name" value="UCP006173"/>
    <property type="match status" value="1"/>
</dbReference>
<feature type="chain" id="PRO_1000131641" description="UPF0260 protein Swit_2819">
    <location>
        <begin position="1"/>
        <end position="146"/>
    </location>
</feature>
<sequence length="146" mass="16791">MTGDKPFWETKRLDEMTRAEWESLCDGCGKCCLHKLEDEETGELMATNVACRLLDRRTGLCKDYKHRRTFVPECVRLTPRVLREIDWLPSTCAYRLLDEGQPLPDWHPLVSGDPESVHKAGVSVRGWTVSEDEAGDLEHHLVDRQL</sequence>
<name>Y2819_RHIWR</name>
<organism>
    <name type="scientific">Rhizorhabdus wittichii (strain DSM 6014 / CCUG 31198 / JCM 15750 / NBRC 105917 / EY 4224 / RW1)</name>
    <name type="common">Sphingomonas wittichii</name>
    <dbReference type="NCBI Taxonomy" id="392499"/>
    <lineage>
        <taxon>Bacteria</taxon>
        <taxon>Pseudomonadati</taxon>
        <taxon>Pseudomonadota</taxon>
        <taxon>Alphaproteobacteria</taxon>
        <taxon>Sphingomonadales</taxon>
        <taxon>Sphingomonadaceae</taxon>
        <taxon>Rhizorhabdus</taxon>
    </lineage>
</organism>
<proteinExistence type="inferred from homology"/>
<evidence type="ECO:0000255" key="1">
    <source>
        <dbReference type="HAMAP-Rule" id="MF_00676"/>
    </source>
</evidence>
<comment type="similarity">
    <text evidence="1">Belongs to the UPF0260 family.</text>
</comment>
<gene>
    <name type="ordered locus">Swit_2819</name>
</gene>
<keyword id="KW-1185">Reference proteome</keyword>
<reference key="1">
    <citation type="journal article" date="2010" name="J. Bacteriol.">
        <title>Genome sequence of the dioxin-mineralizing bacterium Sphingomonas wittichii RW1.</title>
        <authorList>
            <person name="Miller T.R."/>
            <person name="Delcher A.L."/>
            <person name="Salzberg S.L."/>
            <person name="Saunders E."/>
            <person name="Detter J.C."/>
            <person name="Halden R.U."/>
        </authorList>
    </citation>
    <scope>NUCLEOTIDE SEQUENCE [LARGE SCALE GENOMIC DNA]</scope>
    <source>
        <strain>DSM 6014 / CCUG 31198 / JCM 15750 / NBRC 105917 / EY 4224 / RW1</strain>
    </source>
</reference>
<protein>
    <recommendedName>
        <fullName evidence="1">UPF0260 protein Swit_2819</fullName>
    </recommendedName>
</protein>